<feature type="chain" id="PRO_0000317288" description="Zinc finger protein 821">
    <location>
        <begin position="1"/>
        <end position="412"/>
    </location>
</feature>
<feature type="zinc finger region" description="C2H2-type 1" evidence="2">
    <location>
        <begin position="116"/>
        <end position="140"/>
    </location>
</feature>
<feature type="zinc finger region" description="C2H2-type 2" evidence="2">
    <location>
        <begin position="150"/>
        <end position="172"/>
    </location>
</feature>
<feature type="region of interest" description="Disordered" evidence="3">
    <location>
        <begin position="26"/>
        <end position="83"/>
    </location>
</feature>
<feature type="region of interest" description="Disordered" evidence="3">
    <location>
        <begin position="278"/>
        <end position="319"/>
    </location>
</feature>
<feature type="coiled-coil region" evidence="1">
    <location>
        <begin position="257"/>
        <end position="366"/>
    </location>
</feature>
<feature type="compositionally biased region" description="Acidic residues" evidence="3">
    <location>
        <begin position="58"/>
        <end position="67"/>
    </location>
</feature>
<comment type="function">
    <text>May be involved in transcriptional regulation.</text>
</comment>
<comment type="subcellular location">
    <subcellularLocation>
        <location evidence="4">Nucleus</location>
    </subcellularLocation>
</comment>
<comment type="similarity">
    <text evidence="4">Belongs to the krueppel C2H2-type zinc-finger protein family.</text>
</comment>
<organism>
    <name type="scientific">Bos taurus</name>
    <name type="common">Bovine</name>
    <dbReference type="NCBI Taxonomy" id="9913"/>
    <lineage>
        <taxon>Eukaryota</taxon>
        <taxon>Metazoa</taxon>
        <taxon>Chordata</taxon>
        <taxon>Craniata</taxon>
        <taxon>Vertebrata</taxon>
        <taxon>Euteleostomi</taxon>
        <taxon>Mammalia</taxon>
        <taxon>Eutheria</taxon>
        <taxon>Laurasiatheria</taxon>
        <taxon>Artiodactyla</taxon>
        <taxon>Ruminantia</taxon>
        <taxon>Pecora</taxon>
        <taxon>Bovidae</taxon>
        <taxon>Bovinae</taxon>
        <taxon>Bos</taxon>
    </lineage>
</organism>
<proteinExistence type="evidence at transcript level"/>
<reference key="1">
    <citation type="submission" date="2005-11" db="EMBL/GenBank/DDBJ databases">
        <authorList>
            <consortium name="NIH - Mammalian Gene Collection (MGC) project"/>
        </authorList>
    </citation>
    <scope>NUCLEOTIDE SEQUENCE [LARGE SCALE MRNA]</scope>
    <source>
        <strain>Crossbred X Angus</strain>
        <tissue>Liver</tissue>
    </source>
</reference>
<protein>
    <recommendedName>
        <fullName>Zinc finger protein 821</fullName>
    </recommendedName>
</protein>
<sequence length="412" mass="46723">MSRRKQTNPNKVHWDQVFAGLEEQARQAMMKTDFPGDLGSQRQAIQQLRDQDSSSSDSEGDEEETTQDEVSSHTSEEDGGVVKVEKELENAEQPVGGKKVVEHEVTENLHSDPLLGLCQCPLCQLDCGSREQLIAHVYQHTAAVVSAKSYMCPVCGRALSSPGSLGRHLLIHSEDQRSNCAVCGARFTSHATFNSEKLPEVLNVESLPPAHSEGPSSAEGKDIAFTPPVYPAGILLVCNNCAAYRKLLEAQTPSVRKWALRRQNEPLEVRLQRLERERTAKKSRRDNETPEEREVRRMRDREAKRLQRMQETDEQRARRLQRDREAMRLKRANETPEKRQARLIREREAKRLKRRLEKMDMMLRAQFGQDPSAMAALAAEMNFFQLPVSGVELDSQLLGKMAFEEQNSSSLH</sequence>
<accession>Q32KS7</accession>
<keyword id="KW-0175">Coiled coil</keyword>
<keyword id="KW-0238">DNA-binding</keyword>
<keyword id="KW-0479">Metal-binding</keyword>
<keyword id="KW-0539">Nucleus</keyword>
<keyword id="KW-1185">Reference proteome</keyword>
<keyword id="KW-0677">Repeat</keyword>
<keyword id="KW-0804">Transcription</keyword>
<keyword id="KW-0805">Transcription regulation</keyword>
<keyword id="KW-0862">Zinc</keyword>
<keyword id="KW-0863">Zinc-finger</keyword>
<evidence type="ECO:0000255" key="1"/>
<evidence type="ECO:0000255" key="2">
    <source>
        <dbReference type="PROSITE-ProRule" id="PRU00042"/>
    </source>
</evidence>
<evidence type="ECO:0000256" key="3">
    <source>
        <dbReference type="SAM" id="MobiDB-lite"/>
    </source>
</evidence>
<evidence type="ECO:0000305" key="4"/>
<dbReference type="EMBL" id="BC109947">
    <property type="protein sequence ID" value="AAI09948.1"/>
    <property type="molecule type" value="mRNA"/>
</dbReference>
<dbReference type="RefSeq" id="NP_001033241.1">
    <property type="nucleotide sequence ID" value="NM_001038152.2"/>
</dbReference>
<dbReference type="RefSeq" id="XP_005218695.1">
    <property type="nucleotide sequence ID" value="XM_005218638.5"/>
</dbReference>
<dbReference type="RefSeq" id="XP_005218696.1">
    <property type="nucleotide sequence ID" value="XM_005218639.5"/>
</dbReference>
<dbReference type="RefSeq" id="XP_015331243.1">
    <property type="nucleotide sequence ID" value="XM_015475757.1"/>
</dbReference>
<dbReference type="RefSeq" id="XP_015331244.1">
    <property type="nucleotide sequence ID" value="XM_015475758.1"/>
</dbReference>
<dbReference type="RefSeq" id="XP_024834118.1">
    <property type="nucleotide sequence ID" value="XM_024978350.2"/>
</dbReference>
<dbReference type="RefSeq" id="XP_059732783.1">
    <property type="nucleotide sequence ID" value="XM_059876800.1"/>
</dbReference>
<dbReference type="FunCoup" id="Q32KS7">
    <property type="interactions" value="2714"/>
</dbReference>
<dbReference type="STRING" id="9913.ENSBTAP00000032245"/>
<dbReference type="PaxDb" id="9913-ENSBTAP00000032245"/>
<dbReference type="GeneID" id="532668"/>
<dbReference type="KEGG" id="bta:532668"/>
<dbReference type="CTD" id="55565"/>
<dbReference type="VEuPathDB" id="HostDB:ENSBTAG00000021438"/>
<dbReference type="eggNOG" id="KOG1721">
    <property type="taxonomic scope" value="Eukaryota"/>
</dbReference>
<dbReference type="HOGENOM" id="CLU_048218_0_0_1"/>
<dbReference type="InParanoid" id="Q32KS7"/>
<dbReference type="OMA" id="NNCVAYR"/>
<dbReference type="OrthoDB" id="9898763at2759"/>
<dbReference type="TreeFam" id="TF326851"/>
<dbReference type="Proteomes" id="UP000009136">
    <property type="component" value="Chromosome 18"/>
</dbReference>
<dbReference type="Bgee" id="ENSBTAG00000021438">
    <property type="expression patterns" value="Expressed in spermatocyte and 103 other cell types or tissues"/>
</dbReference>
<dbReference type="GO" id="GO:0005634">
    <property type="term" value="C:nucleus"/>
    <property type="evidence" value="ECO:0007669"/>
    <property type="project" value="UniProtKB-SubCell"/>
</dbReference>
<dbReference type="GO" id="GO:0003700">
    <property type="term" value="F:DNA-binding transcription factor activity"/>
    <property type="evidence" value="ECO:0000318"/>
    <property type="project" value="GO_Central"/>
</dbReference>
<dbReference type="GO" id="GO:0000978">
    <property type="term" value="F:RNA polymerase II cis-regulatory region sequence-specific DNA binding"/>
    <property type="evidence" value="ECO:0000318"/>
    <property type="project" value="GO_Central"/>
</dbReference>
<dbReference type="GO" id="GO:0008270">
    <property type="term" value="F:zinc ion binding"/>
    <property type="evidence" value="ECO:0007669"/>
    <property type="project" value="UniProtKB-KW"/>
</dbReference>
<dbReference type="GO" id="GO:0006357">
    <property type="term" value="P:regulation of transcription by RNA polymerase II"/>
    <property type="evidence" value="ECO:0000318"/>
    <property type="project" value="GO_Central"/>
</dbReference>
<dbReference type="FunFam" id="3.30.160.60:FF:000582">
    <property type="entry name" value="zinc finger protein 821 isoform X1"/>
    <property type="match status" value="1"/>
</dbReference>
<dbReference type="Gene3D" id="3.30.160.60">
    <property type="entry name" value="Classic Zinc Finger"/>
    <property type="match status" value="1"/>
</dbReference>
<dbReference type="InterPro" id="IPR036236">
    <property type="entry name" value="Znf_C2H2_sf"/>
</dbReference>
<dbReference type="InterPro" id="IPR013087">
    <property type="entry name" value="Znf_C2H2_type"/>
</dbReference>
<dbReference type="PANTHER" id="PTHR24399:SF23">
    <property type="entry name" value="C2H2-TYPE DOMAIN-CONTAINING PROTEIN"/>
    <property type="match status" value="1"/>
</dbReference>
<dbReference type="PANTHER" id="PTHR24399">
    <property type="entry name" value="ZINC FINGER AND BTB DOMAIN-CONTAINING"/>
    <property type="match status" value="1"/>
</dbReference>
<dbReference type="SMART" id="SM00355">
    <property type="entry name" value="ZnF_C2H2"/>
    <property type="match status" value="2"/>
</dbReference>
<dbReference type="SUPFAM" id="SSF57667">
    <property type="entry name" value="beta-beta-alpha zinc fingers"/>
    <property type="match status" value="1"/>
</dbReference>
<dbReference type="PROSITE" id="PS00028">
    <property type="entry name" value="ZINC_FINGER_C2H2_1"/>
    <property type="match status" value="2"/>
</dbReference>
<dbReference type="PROSITE" id="PS50157">
    <property type="entry name" value="ZINC_FINGER_C2H2_2"/>
    <property type="match status" value="1"/>
</dbReference>
<name>ZN821_BOVIN</name>
<gene>
    <name type="primary">ZNF821</name>
</gene>